<name>CALL_PENDC</name>
<keyword id="KW-0325">Glycoprotein</keyword>
<keyword id="KW-0349">Heme</keyword>
<keyword id="KW-0408">Iron</keyword>
<keyword id="KW-0472">Membrane</keyword>
<keyword id="KW-0479">Metal-binding</keyword>
<keyword id="KW-0503">Monooxygenase</keyword>
<keyword id="KW-0560">Oxidoreductase</keyword>
<keyword id="KW-1185">Reference proteome</keyword>
<keyword id="KW-0812">Transmembrane</keyword>
<keyword id="KW-1133">Transmembrane helix</keyword>
<gene>
    <name evidence="8" type="primary">calL</name>
    <name type="ORF">PENDEC_c013G00617</name>
</gene>
<proteinExistence type="evidence at protein level"/>
<sequence>MSDSTMDTQLALLVWGIAVCVTLAIVVPRWIGNNSKEPPSLGGSMLSNTYQYMTDMHGFLQRVASAQRSSKIIKFRLGPKKIYMVSGEKNIQAINRPSHSISPDVFFLEVMANVWGASKEEVGKFKQDQSGRSKNPVPGHDVKPGQPRLWHGQHRVYSEYLQRTDHANALSNKYFQLFSERLTKQPLGDWTELRLSHFFESDMAEAALVALMGPRIVELNPGFWPTMWEFARLAPRLMWGLPRWVNPKPWEIRELFHGMCRRYVDAAKREFDWNGPDVDAGWEPHYGSRMARELISWAEKNLSPETTAGMVATFIFGTNANSVPMSTWAMMELIADPELYHAVREECLAASTLDPATGERVFDTQKLLSMPLLQSVYIETLRLHVSINVTREVTQPISLDGHVLTPGSLIQAPSQIGQYSEVWGCDGHPASQFWAGRHLKHDSGRPEFTMAGRTASFFPFGGGPSICPGRVFAKQEILMTVAALVTRFEIELIEWTHPDGSKSDRPAQNDQSYIGAVGIPPDRDMKVRWKRLW</sequence>
<reference key="1">
    <citation type="journal article" date="2017" name="Nat. Microbiol.">
        <title>Global analysis of biosynthetic gene clusters reveals vast potential of secondary metabolite production in Penicillium species.</title>
        <authorList>
            <person name="Nielsen J.C."/>
            <person name="Grijseels S."/>
            <person name="Prigent S."/>
            <person name="Ji B."/>
            <person name="Dainat J."/>
            <person name="Nielsen K.F."/>
            <person name="Frisvad J.C."/>
            <person name="Workman M."/>
            <person name="Nielsen J."/>
        </authorList>
    </citation>
    <scope>NUCLEOTIDE SEQUENCE [LARGE SCALE GENOMIC DNA]</scope>
    <source>
        <strain>IBT 11843</strain>
    </source>
</reference>
<reference key="2">
    <citation type="journal article" date="1993" name="J. Antibiot.">
        <title>Calbistrins, novel antifungal agents produced by Penicillium restrictum. I. Production, taxonomy of the producing organism and biological activity.</title>
        <authorList>
            <person name="Jackson M."/>
            <person name="Karwowski J.P."/>
            <person name="Humphrey P.E."/>
            <person name="Kohl W.L."/>
            <person name="Barlow G.J."/>
            <person name="Tanaka S.K."/>
        </authorList>
    </citation>
    <scope>BIOTECHNOLOGY</scope>
</reference>
<reference key="3">
    <citation type="journal article" date="2013" name="Molecules">
        <title>Bio-activity and dereplication-based discovery of ophiobolins and other fungal secondary metabolites targeting leukemia cells.</title>
        <authorList>
            <person name="Bladt T.T."/>
            <person name="Duerr C."/>
            <person name="Knudsen P.B."/>
            <person name="Kildgaard S."/>
            <person name="Frisvad J.C."/>
            <person name="Gotfredsen C.H."/>
            <person name="Seiffert M."/>
            <person name="Larsen T.O."/>
        </authorList>
    </citation>
    <scope>BIOTECHNOLOGY</scope>
</reference>
<reference key="4">
    <citation type="journal article" date="2018" name="Fungal Biol. Biotechnol.">
        <title>Identification of the decumbenone biosynthetic gene cluster in Penicillium decumbens and the importance for production of calbistrin.</title>
        <authorList>
            <person name="Grijseels S."/>
            <person name="Pohl C."/>
            <person name="Nielsen J.C."/>
            <person name="Wasil Z."/>
            <person name="Nygaard Y."/>
            <person name="Nielsen J."/>
            <person name="Frisvad J.C."/>
            <person name="Nielsen K.F."/>
            <person name="Workman M."/>
            <person name="Larsen T.O."/>
            <person name="Driessen A.J.M."/>
            <person name="Frandsen R.J.N."/>
        </authorList>
    </citation>
    <scope>IDENTIFICATION</scope>
    <scope>FUNCTION</scope>
    <scope>INDUCTION</scope>
    <scope>PATHWAY</scope>
</reference>
<feature type="chain" id="PRO_0000446457" description="Cytochrome P450 monooxygenase calL">
    <location>
        <begin position="1"/>
        <end position="533"/>
    </location>
</feature>
<feature type="transmembrane region" description="Helical" evidence="2">
    <location>
        <begin position="8"/>
        <end position="28"/>
    </location>
</feature>
<feature type="region of interest" description="Disordered" evidence="4">
    <location>
        <begin position="123"/>
        <end position="148"/>
    </location>
</feature>
<feature type="binding site" description="axial binding residue" evidence="1">
    <location>
        <position position="467"/>
    </location>
    <ligand>
        <name>heme</name>
        <dbReference type="ChEBI" id="CHEBI:30413"/>
    </ligand>
    <ligandPart>
        <name>Fe</name>
        <dbReference type="ChEBI" id="CHEBI:18248"/>
    </ligandPart>
</feature>
<feature type="glycosylation site" description="N-linked (GlcNAc...) asparagine" evidence="3">
    <location>
        <position position="33"/>
    </location>
</feature>
<feature type="glycosylation site" description="N-linked (GlcNAc...) asparagine" evidence="3">
    <location>
        <position position="388"/>
    </location>
</feature>
<accession>A0A1V6PBE7</accession>
<dbReference type="EC" id="1.-.-.-" evidence="6"/>
<dbReference type="EMBL" id="MDYL01000013">
    <property type="protein sequence ID" value="OQD73856.1"/>
    <property type="molecule type" value="Genomic_DNA"/>
</dbReference>
<dbReference type="SMR" id="A0A1V6PBE7"/>
<dbReference type="STRING" id="69771.A0A1V6PBE7"/>
<dbReference type="GlyCosmos" id="A0A1V6PBE7">
    <property type="glycosylation" value="2 sites, No reported glycans"/>
</dbReference>
<dbReference type="OMA" id="WEPNFGS"/>
<dbReference type="OrthoDB" id="3366823at2759"/>
<dbReference type="Proteomes" id="UP000191522">
    <property type="component" value="Unassembled WGS sequence"/>
</dbReference>
<dbReference type="GO" id="GO:0016020">
    <property type="term" value="C:membrane"/>
    <property type="evidence" value="ECO:0007669"/>
    <property type="project" value="UniProtKB-SubCell"/>
</dbReference>
<dbReference type="GO" id="GO:0020037">
    <property type="term" value="F:heme binding"/>
    <property type="evidence" value="ECO:0007669"/>
    <property type="project" value="InterPro"/>
</dbReference>
<dbReference type="GO" id="GO:0005506">
    <property type="term" value="F:iron ion binding"/>
    <property type="evidence" value="ECO:0007669"/>
    <property type="project" value="InterPro"/>
</dbReference>
<dbReference type="GO" id="GO:0016705">
    <property type="term" value="F:oxidoreductase activity, acting on paired donors, with incorporation or reduction of molecular oxygen"/>
    <property type="evidence" value="ECO:0007669"/>
    <property type="project" value="InterPro"/>
</dbReference>
<dbReference type="GO" id="GO:0008395">
    <property type="term" value="F:steroid hydroxylase activity"/>
    <property type="evidence" value="ECO:0007669"/>
    <property type="project" value="TreeGrafter"/>
</dbReference>
<dbReference type="GO" id="GO:0043386">
    <property type="term" value="P:mycotoxin biosynthetic process"/>
    <property type="evidence" value="ECO:0007669"/>
    <property type="project" value="UniProtKB-ARBA"/>
</dbReference>
<dbReference type="CDD" id="cd11040">
    <property type="entry name" value="CYP7_CYP8-like"/>
    <property type="match status" value="1"/>
</dbReference>
<dbReference type="Gene3D" id="1.10.630.10">
    <property type="entry name" value="Cytochrome P450"/>
    <property type="match status" value="1"/>
</dbReference>
<dbReference type="InterPro" id="IPR050529">
    <property type="entry name" value="CYP450_sterol_14alpha_dmase"/>
</dbReference>
<dbReference type="InterPro" id="IPR001128">
    <property type="entry name" value="Cyt_P450"/>
</dbReference>
<dbReference type="InterPro" id="IPR002401">
    <property type="entry name" value="Cyt_P450_E_grp-I"/>
</dbReference>
<dbReference type="InterPro" id="IPR036396">
    <property type="entry name" value="Cyt_P450_sf"/>
</dbReference>
<dbReference type="PANTHER" id="PTHR24304:SF2">
    <property type="entry name" value="24-HYDROXYCHOLESTEROL 7-ALPHA-HYDROXYLASE"/>
    <property type="match status" value="1"/>
</dbReference>
<dbReference type="PANTHER" id="PTHR24304">
    <property type="entry name" value="CYTOCHROME P450 FAMILY 7"/>
    <property type="match status" value="1"/>
</dbReference>
<dbReference type="Pfam" id="PF00067">
    <property type="entry name" value="p450"/>
    <property type="match status" value="1"/>
</dbReference>
<dbReference type="PRINTS" id="PR00463">
    <property type="entry name" value="EP450I"/>
</dbReference>
<dbReference type="SUPFAM" id="SSF48264">
    <property type="entry name" value="Cytochrome P450"/>
    <property type="match status" value="1"/>
</dbReference>
<evidence type="ECO:0000250" key="1">
    <source>
        <dbReference type="UniProtKB" id="P04798"/>
    </source>
</evidence>
<evidence type="ECO:0000255" key="2"/>
<evidence type="ECO:0000255" key="3">
    <source>
        <dbReference type="PROSITE-ProRule" id="PRU00498"/>
    </source>
</evidence>
<evidence type="ECO:0000256" key="4">
    <source>
        <dbReference type="SAM" id="MobiDB-lite"/>
    </source>
</evidence>
<evidence type="ECO:0000269" key="5">
    <source>
    </source>
</evidence>
<evidence type="ECO:0000269" key="6">
    <source>
    </source>
</evidence>
<evidence type="ECO:0000269" key="7">
    <source>
    </source>
</evidence>
<evidence type="ECO:0000303" key="8">
    <source>
    </source>
</evidence>
<evidence type="ECO:0000305" key="9"/>
<evidence type="ECO:0000305" key="10">
    <source>
    </source>
</evidence>
<comment type="function">
    <text evidence="6 10">Cytochrome P450 monooxygenase; part of the gene cluster that mediates the biosynthesis of calbistrin A and related compounds. Calbistrin A is a secondary metabolite with an interesting structure that was recently found to have bioactivity against leukemia cells. It consists of two polyketides linked by an ester bond: a bicyclic decalin containing polyketide and a linear 12 carbon dioic acid structure (PubMed:30598828). The polyketide synthase calA is probably responsible for forming the decalin moiety. Because calA lacks a designated enoylreductase (ER) domain, the required activity is provided by the trans-enoyl reductase calK (PubMed:30598828). Following release from the PKS, calF then probably catalyzes the oxidation and the subsequent Diels Alder cycloisomerization that lead to the formation of the decalin moiety (Probable). The decalin polyketide backbone includes two C-methyl groups, at C7 and C11 in backbone, of which the C7 position is probably methylated by the methyltransferase domain of calA. A candidate for adding the methyl group at C11, if not done by CalA, is the cluster methyltransferase calH (Probable). Several additional tailoring enzymes within the cluster could be involved in the modification of the decalin polyketide product. Those include the 3 cytochrome P450 monooxygenases CalE, CalG and CalL, of which one might be responsible for the introduction of the extra hydroxyl group attached to the backbone of the decalin moiety, at position C9 in the backbone, that allows for attachment of the linear moiety (Probable). One tailoring enzyme activity that is expected to be involved in biosynthesis of calbistrin is an acyltransferase for connecting the two polyketide synthase products, and which could be performed by the cluster acyltransferase calJ (Probable). The enzyme responsible for the biosynthesis of the linear moiety, probably a second PKS, has not been identified yet (Probable).</text>
</comment>
<comment type="cofactor">
    <cofactor evidence="1">
        <name>heme</name>
        <dbReference type="ChEBI" id="CHEBI:30413"/>
    </cofactor>
</comment>
<comment type="pathway">
    <text evidence="10">Secondary metabolite biosynthesis.</text>
</comment>
<comment type="subcellular location">
    <subcellularLocation>
        <location evidence="2">Membrane</location>
        <topology evidence="2">Single-pass membrane protein</topology>
    </subcellularLocation>
</comment>
<comment type="induction">
    <text evidence="6">Expression is induced in complex medium (Czapek yeast autolysate medium) supporting calbistrin production.</text>
</comment>
<comment type="biotechnology">
    <text evidence="5 7">Calbistrin A has been reported to possess a number of interesting bioactivities including antifungal active against Candida albicans and cytotoxic toward both healthy and leukemic human cells.</text>
</comment>
<comment type="similarity">
    <text evidence="9">Belongs to the cytochrome P450 family.</text>
</comment>
<protein>
    <recommendedName>
        <fullName evidence="8">Cytochrome P450 monooxygenase calL</fullName>
        <ecNumber evidence="6">1.-.-.-</ecNumber>
    </recommendedName>
    <alternativeName>
        <fullName evidence="8">Calbistrin biosynthesis cluster protein L</fullName>
    </alternativeName>
</protein>
<organism>
    <name type="scientific">Penicillium decumbens</name>
    <dbReference type="NCBI Taxonomy" id="69771"/>
    <lineage>
        <taxon>Eukaryota</taxon>
        <taxon>Fungi</taxon>
        <taxon>Dikarya</taxon>
        <taxon>Ascomycota</taxon>
        <taxon>Pezizomycotina</taxon>
        <taxon>Eurotiomycetes</taxon>
        <taxon>Eurotiomycetidae</taxon>
        <taxon>Eurotiales</taxon>
        <taxon>Aspergillaceae</taxon>
        <taxon>Penicillium</taxon>
    </lineage>
</organism>